<organism>
    <name type="scientific">Saccharomyces cerevisiae (strain ATCC 204508 / S288c)</name>
    <name type="common">Baker's yeast</name>
    <dbReference type="NCBI Taxonomy" id="559292"/>
    <lineage>
        <taxon>Eukaryota</taxon>
        <taxon>Fungi</taxon>
        <taxon>Dikarya</taxon>
        <taxon>Ascomycota</taxon>
        <taxon>Saccharomycotina</taxon>
        <taxon>Saccharomycetes</taxon>
        <taxon>Saccharomycetales</taxon>
        <taxon>Saccharomycetaceae</taxon>
        <taxon>Saccharomyces</taxon>
    </lineage>
</organism>
<protein>
    <recommendedName>
        <fullName>Protein SCO1, mitochondrial</fullName>
    </recommendedName>
</protein>
<dbReference type="EMBL" id="X17441">
    <property type="protein sequence ID" value="CAA35490.1"/>
    <property type="molecule type" value="Genomic_DNA"/>
</dbReference>
<dbReference type="EMBL" id="Z35906">
    <property type="protein sequence ID" value="CAA84979.1"/>
    <property type="molecule type" value="Genomic_DNA"/>
</dbReference>
<dbReference type="EMBL" id="AY557863">
    <property type="protein sequence ID" value="AAS56189.1"/>
    <property type="molecule type" value="Genomic_DNA"/>
</dbReference>
<dbReference type="EMBL" id="BK006936">
    <property type="protein sequence ID" value="DAA07157.1"/>
    <property type="molecule type" value="Genomic_DNA"/>
</dbReference>
<dbReference type="PIR" id="JE0051">
    <property type="entry name" value="JE0051"/>
</dbReference>
<dbReference type="RefSeq" id="NP_009593.1">
    <property type="nucleotide sequence ID" value="NM_001178385.1"/>
</dbReference>
<dbReference type="PDB" id="2B7J">
    <property type="method" value="X-ray"/>
    <property type="resolution" value="2.30 A"/>
    <property type="chains" value="A/B/C/D=96-295"/>
</dbReference>
<dbReference type="PDB" id="2B7K">
    <property type="method" value="X-ray"/>
    <property type="resolution" value="1.80 A"/>
    <property type="chains" value="A/B/C/D=96-295"/>
</dbReference>
<dbReference type="PDBsum" id="2B7J"/>
<dbReference type="PDBsum" id="2B7K"/>
<dbReference type="SMR" id="P23833"/>
<dbReference type="BioGRID" id="32738">
    <property type="interactions" value="176"/>
</dbReference>
<dbReference type="DIP" id="DIP-7610N"/>
<dbReference type="FunCoup" id="P23833">
    <property type="interactions" value="632"/>
</dbReference>
<dbReference type="IntAct" id="P23833">
    <property type="interactions" value="3"/>
</dbReference>
<dbReference type="STRING" id="4932.YBR037C"/>
<dbReference type="iPTMnet" id="P23833"/>
<dbReference type="PaxDb" id="4932-YBR037C"/>
<dbReference type="PeptideAtlas" id="P23833"/>
<dbReference type="EnsemblFungi" id="YBR037C_mRNA">
    <property type="protein sequence ID" value="YBR037C"/>
    <property type="gene ID" value="YBR037C"/>
</dbReference>
<dbReference type="GeneID" id="852325"/>
<dbReference type="KEGG" id="sce:YBR037C"/>
<dbReference type="AGR" id="SGD:S000000241"/>
<dbReference type="SGD" id="S000000241">
    <property type="gene designation" value="SCO1"/>
</dbReference>
<dbReference type="VEuPathDB" id="FungiDB:YBR037C"/>
<dbReference type="eggNOG" id="KOG2792">
    <property type="taxonomic scope" value="Eukaryota"/>
</dbReference>
<dbReference type="GeneTree" id="ENSGT00390000004323"/>
<dbReference type="HOGENOM" id="CLU_050131_0_1_1"/>
<dbReference type="InParanoid" id="P23833"/>
<dbReference type="OMA" id="MLYFRVE"/>
<dbReference type="OrthoDB" id="270009at2759"/>
<dbReference type="BioCyc" id="YEAST:G3O-29012-MONOMER"/>
<dbReference type="BioGRID-ORCS" id="852325">
    <property type="hits" value="10 hits in 10 CRISPR screens"/>
</dbReference>
<dbReference type="EvolutionaryTrace" id="P23833"/>
<dbReference type="PRO" id="PR:P23833"/>
<dbReference type="Proteomes" id="UP000002311">
    <property type="component" value="Chromosome II"/>
</dbReference>
<dbReference type="RNAct" id="P23833">
    <property type="molecule type" value="protein"/>
</dbReference>
<dbReference type="GO" id="GO:0005743">
    <property type="term" value="C:mitochondrial inner membrane"/>
    <property type="evidence" value="ECO:0000314"/>
    <property type="project" value="SGD"/>
</dbReference>
<dbReference type="GO" id="GO:0005739">
    <property type="term" value="C:mitochondrion"/>
    <property type="evidence" value="ECO:0007005"/>
    <property type="project" value="SGD"/>
</dbReference>
<dbReference type="GO" id="GO:0016531">
    <property type="term" value="F:copper chaperone activity"/>
    <property type="evidence" value="ECO:0007669"/>
    <property type="project" value="InterPro"/>
</dbReference>
<dbReference type="GO" id="GO:0005507">
    <property type="term" value="F:copper ion binding"/>
    <property type="evidence" value="ECO:0000314"/>
    <property type="project" value="SGD"/>
</dbReference>
<dbReference type="GO" id="GO:0045454">
    <property type="term" value="P:cell redox homeostasis"/>
    <property type="evidence" value="ECO:0000316"/>
    <property type="project" value="SGD"/>
</dbReference>
<dbReference type="GO" id="GO:0034599">
    <property type="term" value="P:cellular response to oxidative stress"/>
    <property type="evidence" value="ECO:0000316"/>
    <property type="project" value="SGD"/>
</dbReference>
<dbReference type="GO" id="GO:0006878">
    <property type="term" value="P:intracellular copper ion homeostasis"/>
    <property type="evidence" value="ECO:0007669"/>
    <property type="project" value="InterPro"/>
</dbReference>
<dbReference type="GO" id="GO:0033617">
    <property type="term" value="P:mitochondrial cytochrome c oxidase assembly"/>
    <property type="evidence" value="ECO:0000315"/>
    <property type="project" value="SGD"/>
</dbReference>
<dbReference type="CDD" id="cd02968">
    <property type="entry name" value="SCO"/>
    <property type="match status" value="1"/>
</dbReference>
<dbReference type="FunFam" id="3.40.30.10:FF:000013">
    <property type="entry name" value="Blast:Protein SCO1 homolog, mitochondrial"/>
    <property type="match status" value="1"/>
</dbReference>
<dbReference type="Gene3D" id="3.40.30.10">
    <property type="entry name" value="Glutaredoxin"/>
    <property type="match status" value="1"/>
</dbReference>
<dbReference type="InterPro" id="IPR003782">
    <property type="entry name" value="SCO1/SenC"/>
</dbReference>
<dbReference type="InterPro" id="IPR017276">
    <property type="entry name" value="Synth_of_cyt-c-oxidase_Sco1/2"/>
</dbReference>
<dbReference type="InterPro" id="IPR036249">
    <property type="entry name" value="Thioredoxin-like_sf"/>
</dbReference>
<dbReference type="PANTHER" id="PTHR12151:SF5">
    <property type="entry name" value="AT19154P"/>
    <property type="match status" value="1"/>
</dbReference>
<dbReference type="PANTHER" id="PTHR12151">
    <property type="entry name" value="ELECTRON TRANSPORT PROTIN SCO1/SENC FAMILY MEMBER"/>
    <property type="match status" value="1"/>
</dbReference>
<dbReference type="Pfam" id="PF02630">
    <property type="entry name" value="SCO1-SenC"/>
    <property type="match status" value="1"/>
</dbReference>
<dbReference type="PIRSF" id="PIRSF037736">
    <property type="entry name" value="SCO1"/>
    <property type="match status" value="1"/>
</dbReference>
<dbReference type="SUPFAM" id="SSF52833">
    <property type="entry name" value="Thioredoxin-like"/>
    <property type="match status" value="1"/>
</dbReference>
<comment type="function">
    <text evidence="4">Required for the accumulation of subunits 1 and 2 of cytochrome c oxidase complex. Thought to play a role in either mitochondrial copper transport or insertion of copper into the active site of COX.</text>
</comment>
<comment type="subcellular location">
    <subcellularLocation>
        <location evidence="5">Mitochondrion inner membrane</location>
    </subcellularLocation>
</comment>
<comment type="miscellaneous">
    <text evidence="3">Present with 2550 molecules/cell in log phase SD medium.</text>
</comment>
<comment type="similarity">
    <text evidence="6">Belongs to the SCO1/2 family.</text>
</comment>
<evidence type="ECO:0000250" key="1"/>
<evidence type="ECO:0000255" key="2"/>
<evidence type="ECO:0000269" key="3">
    <source>
    </source>
</evidence>
<evidence type="ECO:0000269" key="4">
    <source>
    </source>
</evidence>
<evidence type="ECO:0000269" key="5">
    <source>
    </source>
</evidence>
<evidence type="ECO:0000305" key="6"/>
<evidence type="ECO:0007829" key="7">
    <source>
        <dbReference type="PDB" id="2B7J"/>
    </source>
</evidence>
<evidence type="ECO:0007829" key="8">
    <source>
        <dbReference type="PDB" id="2B7K"/>
    </source>
</evidence>
<accession>P23833</accession>
<accession>D6VQ37</accession>
<proteinExistence type="evidence at protein level"/>
<gene>
    <name type="primary">SCO1</name>
    <name type="ordered locus">YBR037C</name>
    <name type="ORF">YBR0406</name>
</gene>
<feature type="transit peptide" description="Mitochondrion" evidence="2">
    <location>
        <begin position="1"/>
        <end status="unknown"/>
    </location>
</feature>
<feature type="chain" id="PRO_0000031923" description="Protein SCO1, mitochondrial">
    <location>
        <begin status="unknown"/>
        <end position="295"/>
    </location>
</feature>
<feature type="transmembrane region" description="Helical" evidence="2">
    <location>
        <begin position="76"/>
        <end position="92"/>
    </location>
</feature>
<feature type="binding site" evidence="1">
    <location>
        <position position="148"/>
    </location>
    <ligand>
        <name>Cu cation</name>
        <dbReference type="ChEBI" id="CHEBI:23378"/>
    </ligand>
</feature>
<feature type="binding site" evidence="1">
    <location>
        <position position="152"/>
    </location>
    <ligand>
        <name>Cu cation</name>
        <dbReference type="ChEBI" id="CHEBI:23378"/>
    </ligand>
</feature>
<feature type="binding site" evidence="1">
    <location>
        <position position="239"/>
    </location>
    <ligand>
        <name>Cu cation</name>
        <dbReference type="ChEBI" id="CHEBI:23378"/>
    </ligand>
</feature>
<feature type="strand" evidence="8">
    <location>
        <begin position="120"/>
        <end position="123"/>
    </location>
</feature>
<feature type="strand" evidence="8">
    <location>
        <begin position="128"/>
        <end position="130"/>
    </location>
</feature>
<feature type="helix" evidence="8">
    <location>
        <begin position="131"/>
        <end position="134"/>
    </location>
</feature>
<feature type="strand" evidence="8">
    <location>
        <begin position="139"/>
        <end position="144"/>
    </location>
</feature>
<feature type="helix" evidence="8">
    <location>
        <begin position="151"/>
        <end position="170"/>
    </location>
</feature>
<feature type="strand" evidence="8">
    <location>
        <begin position="175"/>
        <end position="181"/>
    </location>
</feature>
<feature type="turn" evidence="8">
    <location>
        <begin position="183"/>
        <end position="185"/>
    </location>
</feature>
<feature type="helix" evidence="8">
    <location>
        <begin position="188"/>
        <end position="195"/>
    </location>
</feature>
<feature type="strand" evidence="8">
    <location>
        <begin position="203"/>
        <end position="206"/>
    </location>
</feature>
<feature type="helix" evidence="8">
    <location>
        <begin position="209"/>
        <end position="218"/>
    </location>
</feature>
<feature type="turn" evidence="8">
    <location>
        <begin position="237"/>
        <end position="239"/>
    </location>
</feature>
<feature type="strand" evidence="8">
    <location>
        <begin position="243"/>
        <end position="246"/>
    </location>
</feature>
<feature type="strand" evidence="8">
    <location>
        <begin position="252"/>
        <end position="256"/>
    </location>
</feature>
<feature type="helix" evidence="8">
    <location>
        <begin position="264"/>
        <end position="275"/>
    </location>
</feature>
<feature type="strand" evidence="7">
    <location>
        <begin position="284"/>
        <end position="291"/>
    </location>
</feature>
<reference key="1">
    <citation type="journal article" date="1989" name="Mol. Gen. Genet.">
        <title>Accumulation of the cytochrome c oxidase subunits I and II in yeast requires a mitochondrial membrane-associated protein, encoded by the nuclear SCO1 gene.</title>
        <authorList>
            <person name="Schulze M."/>
            <person name="Roedel G."/>
        </authorList>
    </citation>
    <scope>NUCLEOTIDE SEQUENCE [GENOMIC DNA]</scope>
</reference>
<reference key="2">
    <citation type="journal article" date="1994" name="EMBO J.">
        <title>Complete DNA sequence of yeast chromosome II.</title>
        <authorList>
            <person name="Feldmann H."/>
            <person name="Aigle M."/>
            <person name="Aljinovic G."/>
            <person name="Andre B."/>
            <person name="Baclet M.C."/>
            <person name="Barthe C."/>
            <person name="Baur A."/>
            <person name="Becam A.-M."/>
            <person name="Biteau N."/>
            <person name="Boles E."/>
            <person name="Brandt T."/>
            <person name="Brendel M."/>
            <person name="Brueckner M."/>
            <person name="Bussereau F."/>
            <person name="Christiansen C."/>
            <person name="Contreras R."/>
            <person name="Crouzet M."/>
            <person name="Cziepluch C."/>
            <person name="Demolis N."/>
            <person name="Delaveau T."/>
            <person name="Doignon F."/>
            <person name="Domdey H."/>
            <person name="Duesterhus S."/>
            <person name="Dubois E."/>
            <person name="Dujon B."/>
            <person name="El Bakkoury M."/>
            <person name="Entian K.-D."/>
            <person name="Feuermann M."/>
            <person name="Fiers W."/>
            <person name="Fobo G.M."/>
            <person name="Fritz C."/>
            <person name="Gassenhuber J."/>
            <person name="Glansdorff N."/>
            <person name="Goffeau A."/>
            <person name="Grivell L.A."/>
            <person name="de Haan M."/>
            <person name="Hein C."/>
            <person name="Herbert C.J."/>
            <person name="Hollenberg C.P."/>
            <person name="Holmstroem K."/>
            <person name="Jacq C."/>
            <person name="Jacquet M."/>
            <person name="Jauniaux J.-C."/>
            <person name="Jonniaux J.-L."/>
            <person name="Kallesoee T."/>
            <person name="Kiesau P."/>
            <person name="Kirchrath L."/>
            <person name="Koetter P."/>
            <person name="Korol S."/>
            <person name="Liebl S."/>
            <person name="Logghe M."/>
            <person name="Lohan A.J.E."/>
            <person name="Louis E.J."/>
            <person name="Li Z.Y."/>
            <person name="Maat M.J."/>
            <person name="Mallet L."/>
            <person name="Mannhaupt G."/>
            <person name="Messenguy F."/>
            <person name="Miosga T."/>
            <person name="Molemans F."/>
            <person name="Mueller S."/>
            <person name="Nasr F."/>
            <person name="Obermaier B."/>
            <person name="Perea J."/>
            <person name="Pierard A."/>
            <person name="Piravandi E."/>
            <person name="Pohl F.M."/>
            <person name="Pohl T.M."/>
            <person name="Potier S."/>
            <person name="Proft M."/>
            <person name="Purnelle B."/>
            <person name="Ramezani Rad M."/>
            <person name="Rieger M."/>
            <person name="Rose M."/>
            <person name="Schaaff-Gerstenschlaeger I."/>
            <person name="Scherens B."/>
            <person name="Schwarzlose C."/>
            <person name="Skala J."/>
            <person name="Slonimski P.P."/>
            <person name="Smits P.H.M."/>
            <person name="Souciet J.-L."/>
            <person name="Steensma H.Y."/>
            <person name="Stucka R."/>
            <person name="Urrestarazu L.A."/>
            <person name="van der Aart Q.J.M."/>
            <person name="Van Dyck L."/>
            <person name="Vassarotti A."/>
            <person name="Vetter I."/>
            <person name="Vierendeels F."/>
            <person name="Vissers S."/>
            <person name="Wagner G."/>
            <person name="de Wergifosse P."/>
            <person name="Wolfe K.H."/>
            <person name="Zagulski M."/>
            <person name="Zimmermann F.K."/>
            <person name="Mewes H.-W."/>
            <person name="Kleine K."/>
        </authorList>
    </citation>
    <scope>NUCLEOTIDE SEQUENCE [LARGE SCALE GENOMIC DNA]</scope>
    <source>
        <strain>ATCC 204508 / S288c</strain>
    </source>
</reference>
<reference key="3">
    <citation type="journal article" date="2014" name="G3 (Bethesda)">
        <title>The reference genome sequence of Saccharomyces cerevisiae: Then and now.</title>
        <authorList>
            <person name="Engel S.R."/>
            <person name="Dietrich F.S."/>
            <person name="Fisk D.G."/>
            <person name="Binkley G."/>
            <person name="Balakrishnan R."/>
            <person name="Costanzo M.C."/>
            <person name="Dwight S.S."/>
            <person name="Hitz B.C."/>
            <person name="Karra K."/>
            <person name="Nash R.S."/>
            <person name="Weng S."/>
            <person name="Wong E.D."/>
            <person name="Lloyd P."/>
            <person name="Skrzypek M.S."/>
            <person name="Miyasato S.R."/>
            <person name="Simison M."/>
            <person name="Cherry J.M."/>
        </authorList>
    </citation>
    <scope>GENOME REANNOTATION</scope>
    <source>
        <strain>ATCC 204508 / S288c</strain>
    </source>
</reference>
<reference key="4">
    <citation type="journal article" date="2007" name="Genome Res.">
        <title>Approaching a complete repository of sequence-verified protein-encoding clones for Saccharomyces cerevisiae.</title>
        <authorList>
            <person name="Hu Y."/>
            <person name="Rolfs A."/>
            <person name="Bhullar B."/>
            <person name="Murthy T.V.S."/>
            <person name="Zhu C."/>
            <person name="Berger M.F."/>
            <person name="Camargo A.A."/>
            <person name="Kelley F."/>
            <person name="McCarron S."/>
            <person name="Jepson D."/>
            <person name="Richardson A."/>
            <person name="Raphael J."/>
            <person name="Moreira D."/>
            <person name="Taycher E."/>
            <person name="Zuo D."/>
            <person name="Mohr S."/>
            <person name="Kane M.F."/>
            <person name="Williamson J."/>
            <person name="Simpson A.J.G."/>
            <person name="Bulyk M.L."/>
            <person name="Harlow E."/>
            <person name="Marsischky G."/>
            <person name="Kolodner R.D."/>
            <person name="LaBaer J."/>
        </authorList>
    </citation>
    <scope>NUCLEOTIDE SEQUENCE [GENOMIC DNA]</scope>
    <source>
        <strain>ATCC 204508 / S288c</strain>
    </source>
</reference>
<reference key="5">
    <citation type="journal article" date="1991" name="Mol. Gen. Genet.">
        <title>Immunological identification of yeast SCO1 protein as a component of the inner mitochondrial membrane.</title>
        <authorList>
            <person name="Buchwald P."/>
            <person name="Krummeck G."/>
            <person name="Roedel G."/>
        </authorList>
    </citation>
    <scope>SUBCELLULAR LOCATION</scope>
</reference>
<reference key="6">
    <citation type="journal article" date="2003" name="Nature">
        <title>Global analysis of protein expression in yeast.</title>
        <authorList>
            <person name="Ghaemmaghami S."/>
            <person name="Huh W.-K."/>
            <person name="Bower K."/>
            <person name="Howson R.W."/>
            <person name="Belle A."/>
            <person name="Dephoure N."/>
            <person name="O'Shea E.K."/>
            <person name="Weissman J.S."/>
        </authorList>
    </citation>
    <scope>LEVEL OF PROTEIN EXPRESSION [LARGE SCALE ANALYSIS]</scope>
</reference>
<reference key="7">
    <citation type="journal article" date="2006" name="J. Biol. Inorg. Chem.">
        <title>Crystal structure of yeast Sco1.</title>
        <authorList>
            <person name="Abajian C."/>
            <person name="Rosenzweig A.C."/>
        </authorList>
    </citation>
    <scope>X-RAY CRYSTALLOGRAPHY (1.8 ANGSTROMS) OF 96-295 IN COMPLEX WITH COPPER IONS</scope>
    <scope>FUNCTION</scope>
</reference>
<name>SCO1_YEAST</name>
<keyword id="KW-0002">3D-structure</keyword>
<keyword id="KW-0186">Copper</keyword>
<keyword id="KW-0472">Membrane</keyword>
<keyword id="KW-0479">Metal-binding</keyword>
<keyword id="KW-0496">Mitochondrion</keyword>
<keyword id="KW-0999">Mitochondrion inner membrane</keyword>
<keyword id="KW-1185">Reference proteome</keyword>
<keyword id="KW-0809">Transit peptide</keyword>
<keyword id="KW-0812">Transmembrane</keyword>
<keyword id="KW-1133">Transmembrane helix</keyword>
<sequence length="295" mass="33166">MLKLSRSANLRLVQLPAARLSGNGAKLLTQRGFFTVTRLWQSNGKKPLSRVPVGGTPIKDNGKVREGSIEFSTGKAIALFLAVGGALSYFFNREKRRLETQKEAEANRGYGKPSLGGPFHLEDMYGNEFTEKNLLGKFSIIYFGFSNCPDICPDELDKLGLWLNTLSSKYGITLQPLFITCDPARDSPAVLKEYLSDFHPSILGLTGTFDEVKNACKKYRVYFSTPPNVKPGQDYLVDHSIFFYLMDPEGQFVDALGRNYDEKTGVDKIVEHVKSYVPAEQRAKQKEAWYSFLFK</sequence>